<accession>Q62447</accession>
<accession>Q0P542</accession>
<accession>Q5XKQ9</accession>
<accession>Q9WUZ4</accession>
<comment type="function">
    <text evidence="1">Component of the Mediator complex, a coactivator involved in regulated gene transcription of nearly all RNA polymerase II-dependent genes. Mediator functions as a bridge to convey information from gene-specific regulatory proteins to the basal RNA polymerase II transcription machinery. Mediator is recruited to promoters by direct interactions with regulatory proteins and serves as a scaffold for the assembly of a functional preinitiation complex with RNA polymerase II and the general transcription factors. Binds to and activates cyclin-dependent kinase CDK8 that phosphorylates the CTD (C-terminal domain) of the large subunit of RNA polymerase II (RNAp II), which may inhibit the formation of a transcription initiation complex (By similarity).</text>
</comment>
<comment type="subunit">
    <text evidence="1">Component of the Mediator complex, which is composed of MED1, MED4, MED6, MED7, MED8, MED9, MED10, MED11, MED12, MED13, MED13L, MED14, MED15, MED16, MED17, MED18, MED19, MED20, MED21, MED22, MED23, MED24, MED25, MED26, MED27, MED29, MED30, MED31, CCNC, CDK8 and CDC2L6/CDK11. The MED12, MED13, CCNC and CDK8 subunits form a distinct module termed the CDK8 module. Mediator containing the CDK8 module is less active than Mediator lacking this module in supporting transcriptional activation. Individual preparations of the Mediator complex lacking one or more distinct subunits have been variously termed ARC, CRSP, DRIP, PC2, SMCC and TRAP. The cylin/CDK pair formed by CCNC/CDK8 also associates with the large subunit of RNA polymerase II (By similarity).</text>
</comment>
<comment type="subcellular location">
    <subcellularLocation>
        <location evidence="4">Nucleus</location>
    </subcellularLocation>
</comment>
<comment type="similarity">
    <text evidence="4">Belongs to the cyclin family. Cyclin C subfamily.</text>
</comment>
<proteinExistence type="evidence at transcript level"/>
<organism>
    <name type="scientific">Mus musculus</name>
    <name type="common">Mouse</name>
    <dbReference type="NCBI Taxonomy" id="10090"/>
    <lineage>
        <taxon>Eukaryota</taxon>
        <taxon>Metazoa</taxon>
        <taxon>Chordata</taxon>
        <taxon>Craniata</taxon>
        <taxon>Vertebrata</taxon>
        <taxon>Euteleostomi</taxon>
        <taxon>Mammalia</taxon>
        <taxon>Eutheria</taxon>
        <taxon>Euarchontoglires</taxon>
        <taxon>Glires</taxon>
        <taxon>Rodentia</taxon>
        <taxon>Myomorpha</taxon>
        <taxon>Muroidea</taxon>
        <taxon>Muridae</taxon>
        <taxon>Murinae</taxon>
        <taxon>Mus</taxon>
        <taxon>Mus</taxon>
    </lineage>
</organism>
<evidence type="ECO:0000250" key="1"/>
<evidence type="ECO:0000250" key="2">
    <source>
        <dbReference type="UniProtKB" id="P24863"/>
    </source>
</evidence>
<evidence type="ECO:0000256" key="3">
    <source>
        <dbReference type="SAM" id="MobiDB-lite"/>
    </source>
</evidence>
<evidence type="ECO:0000305" key="4"/>
<gene>
    <name type="primary">Ccnc</name>
</gene>
<name>CCNC_MOUSE</name>
<sequence>MAGNFWQSSHYLQWILDKQDLLKERQKDLKFLSEEEYWKLQIFFTNVIQALGEHLKLRQQVIATATVYFKRFYARYSLKSIDPVLMAPTCVFLASKVEEFGVVSNTRLIAATTSVLKTRFSYAFPKEFPYRMNHILECEFYLLELMDCCLIVYHPYRPLLQYVQDMGQEDVLLPLAWRIVNDTYRTDLCLLYPPFMIALACLHVACVVQQKDARQWFAELSVDMEKILEIIRVILKLYEQWKNFDERKEMATILSKMPKPKPPPNSEGEQGPNGSQNSSYSQS</sequence>
<dbReference type="EMBL" id="U62638">
    <property type="protein sequence ID" value="AAB05260.1"/>
    <property type="molecule type" value="mRNA"/>
</dbReference>
<dbReference type="EMBL" id="U49050">
    <property type="protein sequence ID" value="AAD11444.1"/>
    <property type="molecule type" value="Genomic_DNA"/>
</dbReference>
<dbReference type="EMBL" id="AL772187">
    <property type="status" value="NOT_ANNOTATED_CDS"/>
    <property type="molecule type" value="Genomic_DNA"/>
</dbReference>
<dbReference type="EMBL" id="CH466538">
    <property type="protein sequence ID" value="EDL05561.1"/>
    <property type="molecule type" value="Genomic_DNA"/>
</dbReference>
<dbReference type="EMBL" id="BC003344">
    <property type="protein sequence ID" value="AAH03344.2"/>
    <property type="molecule type" value="mRNA"/>
</dbReference>
<dbReference type="EMBL" id="BC120649">
    <property type="protein sequence ID" value="AAI20650.1"/>
    <property type="molecule type" value="mRNA"/>
</dbReference>
<dbReference type="EMBL" id="BC120677">
    <property type="protein sequence ID" value="AAI20678.1"/>
    <property type="molecule type" value="mRNA"/>
</dbReference>
<dbReference type="EMBL" id="AJ243075">
    <property type="protein sequence ID" value="CAB45390.1"/>
    <property type="molecule type" value="Genomic_DNA"/>
</dbReference>
<dbReference type="EMBL" id="AJ243076">
    <property type="protein sequence ID" value="CAB45390.1"/>
    <property type="status" value="JOINED"/>
    <property type="molecule type" value="Genomic_DNA"/>
</dbReference>
<dbReference type="CCDS" id="CCDS17998.1"/>
<dbReference type="RefSeq" id="NP_001277351.1">
    <property type="nucleotide sequence ID" value="NM_001290422.1"/>
</dbReference>
<dbReference type="RefSeq" id="NP_058026.2">
    <property type="nucleotide sequence ID" value="NM_016746.5"/>
</dbReference>
<dbReference type="SMR" id="Q62447"/>
<dbReference type="BioGRID" id="206188">
    <property type="interactions" value="3"/>
</dbReference>
<dbReference type="ComplexPortal" id="CPX-3266">
    <property type="entry name" value="CKM complex variant 1"/>
</dbReference>
<dbReference type="ComplexPortal" id="CPX-3267">
    <property type="entry name" value="CKM complex variant 2"/>
</dbReference>
<dbReference type="ComplexPortal" id="CPX-331">
    <property type="entry name" value="Cyclin C-CDK3 complex"/>
</dbReference>
<dbReference type="CORUM" id="Q62447"/>
<dbReference type="DIP" id="DIP-61081N"/>
<dbReference type="FunCoup" id="Q62447">
    <property type="interactions" value="2899"/>
</dbReference>
<dbReference type="IntAct" id="Q62447">
    <property type="interactions" value="4"/>
</dbReference>
<dbReference type="STRING" id="10090.ENSMUSP00000100062"/>
<dbReference type="BindingDB" id="Q62447"/>
<dbReference type="ChEMBL" id="CHEMBL4296068"/>
<dbReference type="PhosphoSitePlus" id="Q62447"/>
<dbReference type="PaxDb" id="10090-ENSMUSP00000100062"/>
<dbReference type="ProteomicsDB" id="281127"/>
<dbReference type="Pumba" id="Q62447"/>
<dbReference type="Antibodypedia" id="4188">
    <property type="antibodies" value="345 antibodies from 32 providers"/>
</dbReference>
<dbReference type="DNASU" id="51813"/>
<dbReference type="Ensembl" id="ENSMUST00000102997.8">
    <property type="protein sequence ID" value="ENSMUSP00000100062.2"/>
    <property type="gene ID" value="ENSMUSG00000028252.21"/>
</dbReference>
<dbReference type="GeneID" id="51813"/>
<dbReference type="KEGG" id="mmu:51813"/>
<dbReference type="UCSC" id="uc008scu.3">
    <property type="organism name" value="mouse"/>
</dbReference>
<dbReference type="AGR" id="MGI:1858199"/>
<dbReference type="CTD" id="892"/>
<dbReference type="MGI" id="MGI:1858199">
    <property type="gene designation" value="Ccnc"/>
</dbReference>
<dbReference type="VEuPathDB" id="HostDB:ENSMUSG00000028252"/>
<dbReference type="eggNOG" id="KOG0794">
    <property type="taxonomic scope" value="Eukaryota"/>
</dbReference>
<dbReference type="GeneTree" id="ENSGT00940000155625"/>
<dbReference type="InParanoid" id="Q62447"/>
<dbReference type="OMA" id="CLLHPPH"/>
<dbReference type="OrthoDB" id="10266018at2759"/>
<dbReference type="PhylomeDB" id="Q62447"/>
<dbReference type="Reactome" id="R-MMU-2173796">
    <property type="pathway name" value="SMAD2/SMAD3:SMAD4 heterotrimer regulates transcription"/>
</dbReference>
<dbReference type="BioGRID-ORCS" id="51813">
    <property type="hits" value="23 hits in 81 CRISPR screens"/>
</dbReference>
<dbReference type="ChiTaRS" id="Ccnc">
    <property type="organism name" value="mouse"/>
</dbReference>
<dbReference type="PRO" id="PR:Q62447"/>
<dbReference type="Proteomes" id="UP000000589">
    <property type="component" value="Chromosome 4"/>
</dbReference>
<dbReference type="RNAct" id="Q62447">
    <property type="molecule type" value="protein"/>
</dbReference>
<dbReference type="Bgee" id="ENSMUSG00000028252">
    <property type="expression patterns" value="Expressed in ectoplacental cone and 256 other cell types or tissues"/>
</dbReference>
<dbReference type="ExpressionAtlas" id="Q62447">
    <property type="expression patterns" value="baseline and differential"/>
</dbReference>
<dbReference type="GO" id="GO:1990508">
    <property type="term" value="C:CKM complex"/>
    <property type="evidence" value="ECO:0007669"/>
    <property type="project" value="Ensembl"/>
</dbReference>
<dbReference type="GO" id="GO:0000307">
    <property type="term" value="C:cyclin-dependent protein kinase holoenzyme complex"/>
    <property type="evidence" value="ECO:0000266"/>
    <property type="project" value="ComplexPortal"/>
</dbReference>
<dbReference type="GO" id="GO:0016592">
    <property type="term" value="C:mediator complex"/>
    <property type="evidence" value="ECO:0000314"/>
    <property type="project" value="MGI"/>
</dbReference>
<dbReference type="GO" id="GO:0005654">
    <property type="term" value="C:nucleoplasm"/>
    <property type="evidence" value="ECO:0000304"/>
    <property type="project" value="Reactome"/>
</dbReference>
<dbReference type="GO" id="GO:0016538">
    <property type="term" value="F:cyclin-dependent protein serine/threonine kinase regulator activity"/>
    <property type="evidence" value="ECO:0007669"/>
    <property type="project" value="InterPro"/>
</dbReference>
<dbReference type="GO" id="GO:0042802">
    <property type="term" value="F:identical protein binding"/>
    <property type="evidence" value="ECO:0007669"/>
    <property type="project" value="Ensembl"/>
</dbReference>
<dbReference type="GO" id="GO:0045023">
    <property type="term" value="P:G0 to G1 transition"/>
    <property type="evidence" value="ECO:0000266"/>
    <property type="project" value="ComplexPortal"/>
</dbReference>
<dbReference type="GO" id="GO:0045746">
    <property type="term" value="P:negative regulation of Notch signaling pathway"/>
    <property type="evidence" value="ECO:0000266"/>
    <property type="project" value="ComplexPortal"/>
</dbReference>
<dbReference type="GO" id="GO:0045944">
    <property type="term" value="P:positive regulation of transcription by RNA polymerase II"/>
    <property type="evidence" value="ECO:0007669"/>
    <property type="project" value="Ensembl"/>
</dbReference>
<dbReference type="CDD" id="cd20513">
    <property type="entry name" value="CYCLIN_CCNC_rpt1"/>
    <property type="match status" value="1"/>
</dbReference>
<dbReference type="CDD" id="cd20514">
    <property type="entry name" value="CYCLIN_CCNC_rpt2"/>
    <property type="match status" value="1"/>
</dbReference>
<dbReference type="FunFam" id="1.10.472.10:FF:000015">
    <property type="entry name" value="Putative cyclin-c"/>
    <property type="match status" value="1"/>
</dbReference>
<dbReference type="Gene3D" id="1.10.472.10">
    <property type="entry name" value="Cyclin-like"/>
    <property type="match status" value="2"/>
</dbReference>
<dbReference type="InterPro" id="IPR013763">
    <property type="entry name" value="Cyclin-like_dom"/>
</dbReference>
<dbReference type="InterPro" id="IPR036915">
    <property type="entry name" value="Cyclin-like_sf"/>
</dbReference>
<dbReference type="InterPro" id="IPR043198">
    <property type="entry name" value="Cyclin/Ssn8"/>
</dbReference>
<dbReference type="InterPro" id="IPR031658">
    <property type="entry name" value="Cyclin_C_2"/>
</dbReference>
<dbReference type="InterPro" id="IPR006671">
    <property type="entry name" value="Cyclin_N"/>
</dbReference>
<dbReference type="PANTHER" id="PTHR10026">
    <property type="entry name" value="CYCLIN"/>
    <property type="match status" value="1"/>
</dbReference>
<dbReference type="Pfam" id="PF16899">
    <property type="entry name" value="Cyclin_C_2"/>
    <property type="match status" value="1"/>
</dbReference>
<dbReference type="Pfam" id="PF00134">
    <property type="entry name" value="Cyclin_N"/>
    <property type="match status" value="1"/>
</dbReference>
<dbReference type="PIRSF" id="PIRSF028758">
    <property type="entry name" value="Cyclin, C/H/G types"/>
    <property type="match status" value="1"/>
</dbReference>
<dbReference type="SMART" id="SM00385">
    <property type="entry name" value="CYCLIN"/>
    <property type="match status" value="2"/>
</dbReference>
<dbReference type="SUPFAM" id="SSF47954">
    <property type="entry name" value="Cyclin-like"/>
    <property type="match status" value="2"/>
</dbReference>
<reference key="1">
    <citation type="submission" date="1996-08" db="EMBL/GenBank/DDBJ databases">
        <authorList>
            <person name="Chi P."/>
            <person name="Mifflin R."/>
            <person name="Thompson E.A."/>
        </authorList>
    </citation>
    <scope>NUCLEOTIDE SEQUENCE [GENOMIC DNA / MRNA]</scope>
</reference>
<reference key="2">
    <citation type="journal article" date="2009" name="PLoS Biol.">
        <title>Lineage-specific biology revealed by a finished genome assembly of the mouse.</title>
        <authorList>
            <person name="Church D.M."/>
            <person name="Goodstadt L."/>
            <person name="Hillier L.W."/>
            <person name="Zody M.C."/>
            <person name="Goldstein S."/>
            <person name="She X."/>
            <person name="Bult C.J."/>
            <person name="Agarwala R."/>
            <person name="Cherry J.L."/>
            <person name="DiCuccio M."/>
            <person name="Hlavina W."/>
            <person name="Kapustin Y."/>
            <person name="Meric P."/>
            <person name="Maglott D."/>
            <person name="Birtle Z."/>
            <person name="Marques A.C."/>
            <person name="Graves T."/>
            <person name="Zhou S."/>
            <person name="Teague B."/>
            <person name="Potamousis K."/>
            <person name="Churas C."/>
            <person name="Place M."/>
            <person name="Herschleb J."/>
            <person name="Runnheim R."/>
            <person name="Forrest D."/>
            <person name="Amos-Landgraf J."/>
            <person name="Schwartz D.C."/>
            <person name="Cheng Z."/>
            <person name="Lindblad-Toh K."/>
            <person name="Eichler E.E."/>
            <person name="Ponting C.P."/>
        </authorList>
    </citation>
    <scope>NUCLEOTIDE SEQUENCE [LARGE SCALE GENOMIC DNA]</scope>
    <source>
        <strain>C57BL/6J</strain>
    </source>
</reference>
<reference key="3">
    <citation type="submission" date="2005-07" db="EMBL/GenBank/DDBJ databases">
        <authorList>
            <person name="Mural R.J."/>
            <person name="Adams M.D."/>
            <person name="Myers E.W."/>
            <person name="Smith H.O."/>
            <person name="Venter J.C."/>
        </authorList>
    </citation>
    <scope>NUCLEOTIDE SEQUENCE [LARGE SCALE GENOMIC DNA]</scope>
</reference>
<reference key="4">
    <citation type="journal article" date="2004" name="Genome Res.">
        <title>The status, quality, and expansion of the NIH full-length cDNA project: the Mammalian Gene Collection (MGC).</title>
        <authorList>
            <consortium name="The MGC Project Team"/>
        </authorList>
    </citation>
    <scope>NUCLEOTIDE SEQUENCE [LARGE SCALE MRNA]</scope>
    <source>
        <strain>NMRI</strain>
        <tissue>Brain</tissue>
        <tissue>Mammary tumor</tissue>
    </source>
</reference>
<reference key="5">
    <citation type="submission" date="1999-06" db="EMBL/GenBank/DDBJ databases">
        <title>Transcription of the cyclin C gene.</title>
        <authorList>
            <person name="Barette C."/>
            <person name="Dulic V."/>
            <person name="Piette J."/>
        </authorList>
    </citation>
    <scope>NUCLEOTIDE SEQUENCE [GENOMIC DNA] OF 1-46</scope>
</reference>
<feature type="chain" id="PRO_0000080421" description="Cyclin-C">
    <location>
        <begin position="1"/>
        <end position="283"/>
    </location>
</feature>
<feature type="domain" description="Cyclin N-terminal">
    <location>
        <begin position="20"/>
        <end position="151"/>
    </location>
</feature>
<feature type="region of interest" description="Disordered" evidence="3">
    <location>
        <begin position="252"/>
        <end position="283"/>
    </location>
</feature>
<feature type="compositionally biased region" description="Polar residues" evidence="3">
    <location>
        <begin position="272"/>
        <end position="283"/>
    </location>
</feature>
<feature type="modified residue" description="Phosphoserine" evidence="2">
    <location>
        <position position="275"/>
    </location>
</feature>
<feature type="sequence conflict" description="In Ref. 1; AAB05260." evidence="4" ref="1">
    <original>Y</original>
    <variation>D</variation>
    <location>
        <position position="73"/>
    </location>
</feature>
<protein>
    <recommendedName>
        <fullName>Cyclin-C</fullName>
    </recommendedName>
</protein>
<keyword id="KW-0010">Activator</keyword>
<keyword id="KW-0195">Cyclin</keyword>
<keyword id="KW-0539">Nucleus</keyword>
<keyword id="KW-0597">Phosphoprotein</keyword>
<keyword id="KW-1185">Reference proteome</keyword>
<keyword id="KW-0678">Repressor</keyword>
<keyword id="KW-0804">Transcription</keyword>
<keyword id="KW-0805">Transcription regulation</keyword>